<dbReference type="EC" id="7.1.2.2" evidence="1"/>
<dbReference type="EMBL" id="CR555306">
    <property type="protein sequence ID" value="CAI07821.1"/>
    <property type="molecule type" value="Genomic_DNA"/>
</dbReference>
<dbReference type="RefSeq" id="WP_011237535.1">
    <property type="nucleotide sequence ID" value="NC_006513.1"/>
</dbReference>
<dbReference type="SMR" id="Q5P4E2"/>
<dbReference type="STRING" id="76114.ebA3007"/>
<dbReference type="KEGG" id="eba:ebA3007"/>
<dbReference type="eggNOG" id="COG0055">
    <property type="taxonomic scope" value="Bacteria"/>
</dbReference>
<dbReference type="HOGENOM" id="CLU_022398_0_2_4"/>
<dbReference type="OrthoDB" id="9801639at2"/>
<dbReference type="Proteomes" id="UP000006552">
    <property type="component" value="Chromosome"/>
</dbReference>
<dbReference type="GO" id="GO:0005886">
    <property type="term" value="C:plasma membrane"/>
    <property type="evidence" value="ECO:0007669"/>
    <property type="project" value="UniProtKB-SubCell"/>
</dbReference>
<dbReference type="GO" id="GO:0045259">
    <property type="term" value="C:proton-transporting ATP synthase complex"/>
    <property type="evidence" value="ECO:0007669"/>
    <property type="project" value="UniProtKB-KW"/>
</dbReference>
<dbReference type="GO" id="GO:0005524">
    <property type="term" value="F:ATP binding"/>
    <property type="evidence" value="ECO:0007669"/>
    <property type="project" value="UniProtKB-UniRule"/>
</dbReference>
<dbReference type="GO" id="GO:0016887">
    <property type="term" value="F:ATP hydrolysis activity"/>
    <property type="evidence" value="ECO:0007669"/>
    <property type="project" value="InterPro"/>
</dbReference>
<dbReference type="GO" id="GO:0046933">
    <property type="term" value="F:proton-transporting ATP synthase activity, rotational mechanism"/>
    <property type="evidence" value="ECO:0007669"/>
    <property type="project" value="UniProtKB-UniRule"/>
</dbReference>
<dbReference type="CDD" id="cd18110">
    <property type="entry name" value="ATP-synt_F1_beta_C"/>
    <property type="match status" value="1"/>
</dbReference>
<dbReference type="CDD" id="cd18115">
    <property type="entry name" value="ATP-synt_F1_beta_N"/>
    <property type="match status" value="1"/>
</dbReference>
<dbReference type="CDD" id="cd01133">
    <property type="entry name" value="F1-ATPase_beta_CD"/>
    <property type="match status" value="1"/>
</dbReference>
<dbReference type="FunFam" id="1.10.1140.10:FF:000001">
    <property type="entry name" value="ATP synthase subunit beta"/>
    <property type="match status" value="1"/>
</dbReference>
<dbReference type="FunFam" id="3.40.50.300:FF:000004">
    <property type="entry name" value="ATP synthase subunit beta"/>
    <property type="match status" value="1"/>
</dbReference>
<dbReference type="Gene3D" id="2.40.10.170">
    <property type="match status" value="1"/>
</dbReference>
<dbReference type="Gene3D" id="1.10.1140.10">
    <property type="entry name" value="Bovine Mitochondrial F1-atpase, Atp Synthase Beta Chain, Chain D, domain 3"/>
    <property type="match status" value="1"/>
</dbReference>
<dbReference type="Gene3D" id="3.40.50.300">
    <property type="entry name" value="P-loop containing nucleotide triphosphate hydrolases"/>
    <property type="match status" value="1"/>
</dbReference>
<dbReference type="HAMAP" id="MF_01347">
    <property type="entry name" value="ATP_synth_beta_bact"/>
    <property type="match status" value="1"/>
</dbReference>
<dbReference type="InterPro" id="IPR003593">
    <property type="entry name" value="AAA+_ATPase"/>
</dbReference>
<dbReference type="InterPro" id="IPR055190">
    <property type="entry name" value="ATP-synt_VA_C"/>
</dbReference>
<dbReference type="InterPro" id="IPR005722">
    <property type="entry name" value="ATP_synth_F1_bsu"/>
</dbReference>
<dbReference type="InterPro" id="IPR020003">
    <property type="entry name" value="ATPase_a/bsu_AS"/>
</dbReference>
<dbReference type="InterPro" id="IPR050053">
    <property type="entry name" value="ATPase_alpha/beta_chains"/>
</dbReference>
<dbReference type="InterPro" id="IPR004100">
    <property type="entry name" value="ATPase_F1/V1/A1_a/bsu_N"/>
</dbReference>
<dbReference type="InterPro" id="IPR036121">
    <property type="entry name" value="ATPase_F1/V1/A1_a/bsu_N_sf"/>
</dbReference>
<dbReference type="InterPro" id="IPR000194">
    <property type="entry name" value="ATPase_F1/V1/A1_a/bsu_nucl-bd"/>
</dbReference>
<dbReference type="InterPro" id="IPR024034">
    <property type="entry name" value="ATPase_F1/V1_b/a_C"/>
</dbReference>
<dbReference type="InterPro" id="IPR027417">
    <property type="entry name" value="P-loop_NTPase"/>
</dbReference>
<dbReference type="NCBIfam" id="TIGR01039">
    <property type="entry name" value="atpD"/>
    <property type="match status" value="1"/>
</dbReference>
<dbReference type="PANTHER" id="PTHR15184">
    <property type="entry name" value="ATP SYNTHASE"/>
    <property type="match status" value="1"/>
</dbReference>
<dbReference type="PANTHER" id="PTHR15184:SF71">
    <property type="entry name" value="ATP SYNTHASE SUBUNIT BETA, MITOCHONDRIAL"/>
    <property type="match status" value="1"/>
</dbReference>
<dbReference type="Pfam" id="PF00006">
    <property type="entry name" value="ATP-synt_ab"/>
    <property type="match status" value="1"/>
</dbReference>
<dbReference type="Pfam" id="PF02874">
    <property type="entry name" value="ATP-synt_ab_N"/>
    <property type="match status" value="1"/>
</dbReference>
<dbReference type="Pfam" id="PF22919">
    <property type="entry name" value="ATP-synt_VA_C"/>
    <property type="match status" value="1"/>
</dbReference>
<dbReference type="SMART" id="SM00382">
    <property type="entry name" value="AAA"/>
    <property type="match status" value="1"/>
</dbReference>
<dbReference type="SUPFAM" id="SSF47917">
    <property type="entry name" value="C-terminal domain of alpha and beta subunits of F1 ATP synthase"/>
    <property type="match status" value="1"/>
</dbReference>
<dbReference type="SUPFAM" id="SSF50615">
    <property type="entry name" value="N-terminal domain of alpha and beta subunits of F1 ATP synthase"/>
    <property type="match status" value="1"/>
</dbReference>
<dbReference type="SUPFAM" id="SSF52540">
    <property type="entry name" value="P-loop containing nucleoside triphosphate hydrolases"/>
    <property type="match status" value="1"/>
</dbReference>
<dbReference type="PROSITE" id="PS00152">
    <property type="entry name" value="ATPASE_ALPHA_BETA"/>
    <property type="match status" value="1"/>
</dbReference>
<evidence type="ECO:0000255" key="1">
    <source>
        <dbReference type="HAMAP-Rule" id="MF_01347"/>
    </source>
</evidence>
<gene>
    <name evidence="1" type="primary">atpD</name>
    <name type="ordered locus">AZOSEA16960</name>
    <name type="ORF">ebA3007</name>
</gene>
<keyword id="KW-0066">ATP synthesis</keyword>
<keyword id="KW-0067">ATP-binding</keyword>
<keyword id="KW-0997">Cell inner membrane</keyword>
<keyword id="KW-1003">Cell membrane</keyword>
<keyword id="KW-0139">CF(1)</keyword>
<keyword id="KW-0375">Hydrogen ion transport</keyword>
<keyword id="KW-0406">Ion transport</keyword>
<keyword id="KW-0472">Membrane</keyword>
<keyword id="KW-0547">Nucleotide-binding</keyword>
<keyword id="KW-1185">Reference proteome</keyword>
<keyword id="KW-1278">Translocase</keyword>
<keyword id="KW-0813">Transport</keyword>
<comment type="function">
    <text evidence="1">Produces ATP from ADP in the presence of a proton gradient across the membrane. The catalytic sites are hosted primarily by the beta subunits.</text>
</comment>
<comment type="catalytic activity">
    <reaction evidence="1">
        <text>ATP + H2O + 4 H(+)(in) = ADP + phosphate + 5 H(+)(out)</text>
        <dbReference type="Rhea" id="RHEA:57720"/>
        <dbReference type="ChEBI" id="CHEBI:15377"/>
        <dbReference type="ChEBI" id="CHEBI:15378"/>
        <dbReference type="ChEBI" id="CHEBI:30616"/>
        <dbReference type="ChEBI" id="CHEBI:43474"/>
        <dbReference type="ChEBI" id="CHEBI:456216"/>
        <dbReference type="EC" id="7.1.2.2"/>
    </reaction>
</comment>
<comment type="subunit">
    <text evidence="1">F-type ATPases have 2 components, CF(1) - the catalytic core - and CF(0) - the membrane proton channel. CF(1) has five subunits: alpha(3), beta(3), gamma(1), delta(1), epsilon(1). CF(0) has three main subunits: a(1), b(2) and c(9-12). The alpha and beta chains form an alternating ring which encloses part of the gamma chain. CF(1) is attached to CF(0) by a central stalk formed by the gamma and epsilon chains, while a peripheral stalk is formed by the delta and b chains.</text>
</comment>
<comment type="subcellular location">
    <subcellularLocation>
        <location evidence="1">Cell inner membrane</location>
        <topology evidence="1">Peripheral membrane protein</topology>
    </subcellularLocation>
</comment>
<comment type="similarity">
    <text evidence="1">Belongs to the ATPase alpha/beta chains family.</text>
</comment>
<reference key="1">
    <citation type="journal article" date="2005" name="Arch. Microbiol.">
        <title>The genome sequence of an anaerobic aromatic-degrading denitrifying bacterium, strain EbN1.</title>
        <authorList>
            <person name="Rabus R."/>
            <person name="Kube M."/>
            <person name="Heider J."/>
            <person name="Beck A."/>
            <person name="Heitmann K."/>
            <person name="Widdel F."/>
            <person name="Reinhardt R."/>
        </authorList>
    </citation>
    <scope>NUCLEOTIDE SEQUENCE [LARGE SCALE GENOMIC DNA]</scope>
    <source>
        <strain>DSM 19018 / LMG 30748 / EbN1</strain>
    </source>
</reference>
<protein>
    <recommendedName>
        <fullName evidence="1">ATP synthase subunit beta</fullName>
        <ecNumber evidence="1">7.1.2.2</ecNumber>
    </recommendedName>
    <alternativeName>
        <fullName evidence="1">ATP synthase F1 sector subunit beta</fullName>
    </alternativeName>
    <alternativeName>
        <fullName evidence="1">F-ATPase subunit beta</fullName>
    </alternativeName>
</protein>
<organism>
    <name type="scientific">Aromatoleum aromaticum (strain DSM 19018 / LMG 30748 / EbN1)</name>
    <name type="common">Azoarcus sp. (strain EbN1)</name>
    <dbReference type="NCBI Taxonomy" id="76114"/>
    <lineage>
        <taxon>Bacteria</taxon>
        <taxon>Pseudomonadati</taxon>
        <taxon>Pseudomonadota</taxon>
        <taxon>Betaproteobacteria</taxon>
        <taxon>Rhodocyclales</taxon>
        <taxon>Rhodocyclaceae</taxon>
        <taxon>Aromatoleum</taxon>
    </lineage>
</organism>
<sequence length="466" mass="50654">MSQGTIVQCIGAVVDIQFPREAMPKVYDALKLENAAGSFAEEGLTFEVQQQLGDGVVRTIAMGSSDGLRRGMKVASTGKGISIPVGHGTLGRIMDVLGRPIDEAGPIEADELRPIHAKAPKFDELSPSVDLLETGIKVIDLVCPFAKGGKVGLFGGAGVGKTVNMMELINNIAKQHSGLSVFAGVGERTREGNDFYHEMKDSNVLDKVAMVFGQMNEPPGNRLRVALTGLTMAERFRDEGRDILFFVDNIYRYTLAGTEVSALLGRMPSAVGYQPTLAEEMGRLQERITSTKVGSITSIQAVYVPADDLTDPSPATTFLHLDSTVVLSRDIAALGIYPAVDPLDSTSRQLDPLVVGEEHYNVARQVQVTLQRYKELRDIIAILGMDELSPEDKLAVSRARKIQRFLSQPFHVAEVFTGSPGKYVPLKDTINGFKMIVNGECDHLPEQAFYMVGGIEEAMEKAKKLQ</sequence>
<proteinExistence type="inferred from homology"/>
<feature type="chain" id="PRO_0000254204" description="ATP synthase subunit beta">
    <location>
        <begin position="1"/>
        <end position="466"/>
    </location>
</feature>
<feature type="binding site" evidence="1">
    <location>
        <begin position="155"/>
        <end position="162"/>
    </location>
    <ligand>
        <name>ATP</name>
        <dbReference type="ChEBI" id="CHEBI:30616"/>
    </ligand>
</feature>
<accession>Q5P4E2</accession>
<name>ATPB_AROAE</name>